<evidence type="ECO:0000255" key="1">
    <source>
        <dbReference type="HAMAP-Rule" id="MF_00015"/>
    </source>
</evidence>
<feature type="chain" id="PRO_0000170006" description="LexA repressor">
    <location>
        <begin position="1"/>
        <end position="207"/>
    </location>
</feature>
<feature type="DNA-binding region" description="H-T-H motif" evidence="1">
    <location>
        <begin position="28"/>
        <end position="48"/>
    </location>
</feature>
<feature type="active site" description="For autocatalytic cleavage activity" evidence="1">
    <location>
        <position position="129"/>
    </location>
</feature>
<feature type="active site" description="For autocatalytic cleavage activity" evidence="1">
    <location>
        <position position="167"/>
    </location>
</feature>
<feature type="site" description="Cleavage; by autolysis" evidence="1">
    <location>
        <begin position="94"/>
        <end position="95"/>
    </location>
</feature>
<sequence length="207" mass="23134">MSKLSRRQQEILDYIKEEVRAKGYPPSVREIGEAVGLASSSTVHGHLSRLEKKGYIRRDPTKPRAIEVLDLENLASETTEAKATYIPVVGKVTAGLPITAVENVEEYFPLPEQLTANDNTYALRIQGDSMIEAGIFDGDLVIVRQQQTADNGDIIVAMTEEDEATVKRFFREKDYIRLQPENSTMEPIILTTCTILGKVIGVFRTIH</sequence>
<dbReference type="EC" id="3.4.21.88" evidence="1"/>
<dbReference type="EMBL" id="BA000004">
    <property type="protein sequence ID" value="BAB06075.1"/>
    <property type="molecule type" value="Genomic_DNA"/>
</dbReference>
<dbReference type="PIR" id="D83944">
    <property type="entry name" value="D83944"/>
</dbReference>
<dbReference type="RefSeq" id="WP_010898510.1">
    <property type="nucleotide sequence ID" value="NC_002570.2"/>
</dbReference>
<dbReference type="SMR" id="Q9KAD3"/>
<dbReference type="STRING" id="272558.gene:10728254"/>
<dbReference type="MEROPS" id="S24.001"/>
<dbReference type="KEGG" id="bha:BH2356"/>
<dbReference type="eggNOG" id="COG1974">
    <property type="taxonomic scope" value="Bacteria"/>
</dbReference>
<dbReference type="HOGENOM" id="CLU_066192_45_1_9"/>
<dbReference type="OrthoDB" id="9802364at2"/>
<dbReference type="Proteomes" id="UP000001258">
    <property type="component" value="Chromosome"/>
</dbReference>
<dbReference type="GO" id="GO:0003677">
    <property type="term" value="F:DNA binding"/>
    <property type="evidence" value="ECO:0007669"/>
    <property type="project" value="UniProtKB-UniRule"/>
</dbReference>
<dbReference type="GO" id="GO:0004252">
    <property type="term" value="F:serine-type endopeptidase activity"/>
    <property type="evidence" value="ECO:0007669"/>
    <property type="project" value="UniProtKB-UniRule"/>
</dbReference>
<dbReference type="GO" id="GO:0006281">
    <property type="term" value="P:DNA repair"/>
    <property type="evidence" value="ECO:0007669"/>
    <property type="project" value="UniProtKB-UniRule"/>
</dbReference>
<dbReference type="GO" id="GO:0006260">
    <property type="term" value="P:DNA replication"/>
    <property type="evidence" value="ECO:0007669"/>
    <property type="project" value="UniProtKB-UniRule"/>
</dbReference>
<dbReference type="GO" id="GO:0045892">
    <property type="term" value="P:negative regulation of DNA-templated transcription"/>
    <property type="evidence" value="ECO:0007669"/>
    <property type="project" value="UniProtKB-UniRule"/>
</dbReference>
<dbReference type="GO" id="GO:0006508">
    <property type="term" value="P:proteolysis"/>
    <property type="evidence" value="ECO:0007669"/>
    <property type="project" value="InterPro"/>
</dbReference>
<dbReference type="GO" id="GO:0009432">
    <property type="term" value="P:SOS response"/>
    <property type="evidence" value="ECO:0007669"/>
    <property type="project" value="UniProtKB-UniRule"/>
</dbReference>
<dbReference type="CDD" id="cd00090">
    <property type="entry name" value="HTH_ARSR"/>
    <property type="match status" value="1"/>
</dbReference>
<dbReference type="CDD" id="cd06529">
    <property type="entry name" value="S24_LexA-like"/>
    <property type="match status" value="1"/>
</dbReference>
<dbReference type="FunFam" id="1.10.10.10:FF:000009">
    <property type="entry name" value="LexA repressor"/>
    <property type="match status" value="1"/>
</dbReference>
<dbReference type="FunFam" id="2.10.109.10:FF:000001">
    <property type="entry name" value="LexA repressor"/>
    <property type="match status" value="1"/>
</dbReference>
<dbReference type="Gene3D" id="2.10.109.10">
    <property type="entry name" value="Umud Fragment, subunit A"/>
    <property type="match status" value="1"/>
</dbReference>
<dbReference type="Gene3D" id="1.10.10.10">
    <property type="entry name" value="Winged helix-like DNA-binding domain superfamily/Winged helix DNA-binding domain"/>
    <property type="match status" value="1"/>
</dbReference>
<dbReference type="HAMAP" id="MF_00015">
    <property type="entry name" value="LexA"/>
    <property type="match status" value="1"/>
</dbReference>
<dbReference type="InterPro" id="IPR011991">
    <property type="entry name" value="ArsR-like_HTH"/>
</dbReference>
<dbReference type="InterPro" id="IPR006200">
    <property type="entry name" value="LexA"/>
</dbReference>
<dbReference type="InterPro" id="IPR039418">
    <property type="entry name" value="LexA-like"/>
</dbReference>
<dbReference type="InterPro" id="IPR036286">
    <property type="entry name" value="LexA/Signal_pep-like_sf"/>
</dbReference>
<dbReference type="InterPro" id="IPR006199">
    <property type="entry name" value="LexA_DNA-bd_dom"/>
</dbReference>
<dbReference type="InterPro" id="IPR050077">
    <property type="entry name" value="LexA_repressor"/>
</dbReference>
<dbReference type="InterPro" id="IPR006197">
    <property type="entry name" value="Peptidase_S24_LexA"/>
</dbReference>
<dbReference type="InterPro" id="IPR015927">
    <property type="entry name" value="Peptidase_S24_S26A/B/C"/>
</dbReference>
<dbReference type="InterPro" id="IPR036388">
    <property type="entry name" value="WH-like_DNA-bd_sf"/>
</dbReference>
<dbReference type="InterPro" id="IPR036390">
    <property type="entry name" value="WH_DNA-bd_sf"/>
</dbReference>
<dbReference type="NCBIfam" id="TIGR00498">
    <property type="entry name" value="lexA"/>
    <property type="match status" value="1"/>
</dbReference>
<dbReference type="PANTHER" id="PTHR33516">
    <property type="entry name" value="LEXA REPRESSOR"/>
    <property type="match status" value="1"/>
</dbReference>
<dbReference type="PANTHER" id="PTHR33516:SF2">
    <property type="entry name" value="LEXA REPRESSOR-RELATED"/>
    <property type="match status" value="1"/>
</dbReference>
<dbReference type="Pfam" id="PF01726">
    <property type="entry name" value="LexA_DNA_bind"/>
    <property type="match status" value="1"/>
</dbReference>
<dbReference type="Pfam" id="PF00717">
    <property type="entry name" value="Peptidase_S24"/>
    <property type="match status" value="1"/>
</dbReference>
<dbReference type="PRINTS" id="PR00726">
    <property type="entry name" value="LEXASERPTASE"/>
</dbReference>
<dbReference type="SUPFAM" id="SSF51306">
    <property type="entry name" value="LexA/Signal peptidase"/>
    <property type="match status" value="1"/>
</dbReference>
<dbReference type="SUPFAM" id="SSF46785">
    <property type="entry name" value="Winged helix' DNA-binding domain"/>
    <property type="match status" value="1"/>
</dbReference>
<reference key="1">
    <citation type="journal article" date="2000" name="Nucleic Acids Res.">
        <title>Complete genome sequence of the alkaliphilic bacterium Bacillus halodurans and genomic sequence comparison with Bacillus subtilis.</title>
        <authorList>
            <person name="Takami H."/>
            <person name="Nakasone K."/>
            <person name="Takaki Y."/>
            <person name="Maeno G."/>
            <person name="Sasaki R."/>
            <person name="Masui N."/>
            <person name="Fuji F."/>
            <person name="Hirama C."/>
            <person name="Nakamura Y."/>
            <person name="Ogasawara N."/>
            <person name="Kuhara S."/>
            <person name="Horikoshi K."/>
        </authorList>
    </citation>
    <scope>NUCLEOTIDE SEQUENCE [LARGE SCALE GENOMIC DNA]</scope>
    <source>
        <strain>ATCC BAA-125 / DSM 18197 / FERM 7344 / JCM 9153 / C-125</strain>
    </source>
</reference>
<name>LEXA_HALH5</name>
<protein>
    <recommendedName>
        <fullName evidence="1">LexA repressor</fullName>
        <ecNumber evidence="1">3.4.21.88</ecNumber>
    </recommendedName>
</protein>
<comment type="function">
    <text evidence="1">Represses a number of genes involved in the response to DNA damage (SOS response), including recA and lexA. In the presence of single-stranded DNA, RecA interacts with LexA causing an autocatalytic cleavage which disrupts the DNA-binding part of LexA, leading to derepression of the SOS regulon and eventually DNA repair.</text>
</comment>
<comment type="catalytic activity">
    <reaction evidence="1">
        <text>Hydrolysis of Ala-|-Gly bond in repressor LexA.</text>
        <dbReference type="EC" id="3.4.21.88"/>
    </reaction>
</comment>
<comment type="subunit">
    <text evidence="1">Homodimer.</text>
</comment>
<comment type="similarity">
    <text evidence="1">Belongs to the peptidase S24 family.</text>
</comment>
<proteinExistence type="inferred from homology"/>
<keyword id="KW-0068">Autocatalytic cleavage</keyword>
<keyword id="KW-0227">DNA damage</keyword>
<keyword id="KW-0234">DNA repair</keyword>
<keyword id="KW-0235">DNA replication</keyword>
<keyword id="KW-0238">DNA-binding</keyword>
<keyword id="KW-0378">Hydrolase</keyword>
<keyword id="KW-1185">Reference proteome</keyword>
<keyword id="KW-0678">Repressor</keyword>
<keyword id="KW-0742">SOS response</keyword>
<keyword id="KW-0804">Transcription</keyword>
<keyword id="KW-0805">Transcription regulation</keyword>
<gene>
    <name evidence="1" type="primary">lexA</name>
    <name type="ordered locus">BH2356</name>
</gene>
<organism>
    <name type="scientific">Halalkalibacterium halodurans (strain ATCC BAA-125 / DSM 18197 / FERM 7344 / JCM 9153 / C-125)</name>
    <name type="common">Bacillus halodurans</name>
    <dbReference type="NCBI Taxonomy" id="272558"/>
    <lineage>
        <taxon>Bacteria</taxon>
        <taxon>Bacillati</taxon>
        <taxon>Bacillota</taxon>
        <taxon>Bacilli</taxon>
        <taxon>Bacillales</taxon>
        <taxon>Bacillaceae</taxon>
        <taxon>Halalkalibacterium (ex Joshi et al. 2022)</taxon>
    </lineage>
</organism>
<accession>Q9KAD3</accession>